<feature type="chain" id="PRO_0000219833" description="Light-independent protochlorophyllide reductase subunit B">
    <location>
        <begin position="1"/>
        <end position="531"/>
    </location>
</feature>
<feature type="active site" description="Proton donor" evidence="1">
    <location>
        <position position="296"/>
    </location>
</feature>
<feature type="binding site" evidence="1">
    <location>
        <position position="36"/>
    </location>
    <ligand>
        <name>[4Fe-4S] cluster</name>
        <dbReference type="ChEBI" id="CHEBI:49883"/>
        <note>ligand shared with heterodimeric partner</note>
    </ligand>
</feature>
<feature type="binding site" evidence="1">
    <location>
        <begin position="431"/>
        <end position="432"/>
    </location>
    <ligand>
        <name>substrate</name>
    </ligand>
</feature>
<evidence type="ECO:0000255" key="1">
    <source>
        <dbReference type="HAMAP-Rule" id="MF_00353"/>
    </source>
</evidence>
<keyword id="KW-0004">4Fe-4S</keyword>
<keyword id="KW-0067">ATP-binding</keyword>
<keyword id="KW-0149">Chlorophyll biosynthesis</keyword>
<keyword id="KW-0150">Chloroplast</keyword>
<keyword id="KW-0408">Iron</keyword>
<keyword id="KW-0411">Iron-sulfur</keyword>
<keyword id="KW-0479">Metal-binding</keyword>
<keyword id="KW-0547">Nucleotide-binding</keyword>
<keyword id="KW-0560">Oxidoreductase</keyword>
<keyword id="KW-0602">Photosynthesis</keyword>
<keyword id="KW-0934">Plastid</keyword>
<dbReference type="EC" id="1.3.7.7" evidence="1"/>
<dbReference type="EMBL" id="AF137379">
    <property type="protein sequence ID" value="AAD54931.1"/>
    <property type="molecule type" value="Genomic_DNA"/>
</dbReference>
<dbReference type="EMBL" id="AF137379">
    <property type="protein sequence ID" value="AAD54858.1"/>
    <property type="molecule type" value="Genomic_DNA"/>
</dbReference>
<dbReference type="RefSeq" id="NP_050887.1">
    <property type="nucleotide sequence ID" value="NC_000927.1"/>
</dbReference>
<dbReference type="RefSeq" id="NP_050960.1">
    <property type="nucleotide sequence ID" value="NC_000927.1"/>
</dbReference>
<dbReference type="SMR" id="Q9T467"/>
<dbReference type="GeneID" id="801951"/>
<dbReference type="GeneID" id="802015"/>
<dbReference type="UniPathway" id="UPA00670"/>
<dbReference type="GO" id="GO:0009507">
    <property type="term" value="C:chloroplast"/>
    <property type="evidence" value="ECO:0007669"/>
    <property type="project" value="UniProtKB-SubCell"/>
</dbReference>
<dbReference type="GO" id="GO:0051539">
    <property type="term" value="F:4 iron, 4 sulfur cluster binding"/>
    <property type="evidence" value="ECO:0007669"/>
    <property type="project" value="UniProtKB-UniRule"/>
</dbReference>
<dbReference type="GO" id="GO:0005524">
    <property type="term" value="F:ATP binding"/>
    <property type="evidence" value="ECO:0007669"/>
    <property type="project" value="UniProtKB-UniRule"/>
</dbReference>
<dbReference type="GO" id="GO:0046872">
    <property type="term" value="F:metal ion binding"/>
    <property type="evidence" value="ECO:0007669"/>
    <property type="project" value="UniProtKB-KW"/>
</dbReference>
<dbReference type="GO" id="GO:0016730">
    <property type="term" value="F:oxidoreductase activity, acting on iron-sulfur proteins as donors"/>
    <property type="evidence" value="ECO:0007669"/>
    <property type="project" value="InterPro"/>
</dbReference>
<dbReference type="GO" id="GO:0016636">
    <property type="term" value="F:oxidoreductase activity, acting on the CH-CH group of donors, iron-sulfur protein as acceptor"/>
    <property type="evidence" value="ECO:0007669"/>
    <property type="project" value="UniProtKB-UniRule"/>
</dbReference>
<dbReference type="GO" id="GO:0036068">
    <property type="term" value="P:light-independent chlorophyll biosynthetic process"/>
    <property type="evidence" value="ECO:0007669"/>
    <property type="project" value="UniProtKB-UniRule"/>
</dbReference>
<dbReference type="GO" id="GO:0019685">
    <property type="term" value="P:photosynthesis, dark reaction"/>
    <property type="evidence" value="ECO:0007669"/>
    <property type="project" value="InterPro"/>
</dbReference>
<dbReference type="CDD" id="cd01981">
    <property type="entry name" value="Pchlide_reductase_B"/>
    <property type="match status" value="1"/>
</dbReference>
<dbReference type="Gene3D" id="1.20.89.20">
    <property type="match status" value="1"/>
</dbReference>
<dbReference type="Gene3D" id="3.40.50.1980">
    <property type="entry name" value="Nitrogenase molybdenum iron protein domain"/>
    <property type="match status" value="3"/>
</dbReference>
<dbReference type="Gene3D" id="1.10.8.550">
    <property type="entry name" value="Proto-chlorophyllide reductase 57 kD subunit B"/>
    <property type="match status" value="1"/>
</dbReference>
<dbReference type="HAMAP" id="MF_00353">
    <property type="entry name" value="ChlB_BchB"/>
    <property type="match status" value="1"/>
</dbReference>
<dbReference type="InterPro" id="IPR050152">
    <property type="entry name" value="ChlB/BchB/BchZ"/>
</dbReference>
<dbReference type="InterPro" id="IPR013580">
    <property type="entry name" value="LI-POR_suB-like_C"/>
</dbReference>
<dbReference type="InterPro" id="IPR000510">
    <property type="entry name" value="Nase/OxRdtase_comp1"/>
</dbReference>
<dbReference type="InterPro" id="IPR042298">
    <property type="entry name" value="P-CP_red_C"/>
</dbReference>
<dbReference type="InterPro" id="IPR005969">
    <property type="entry name" value="Protochl_reductB"/>
</dbReference>
<dbReference type="InterPro" id="IPR016209">
    <property type="entry name" value="Protochlorophyllide_Rdtase"/>
</dbReference>
<dbReference type="NCBIfam" id="TIGR01278">
    <property type="entry name" value="DPOR_BchB"/>
    <property type="match status" value="1"/>
</dbReference>
<dbReference type="NCBIfam" id="NF002789">
    <property type="entry name" value="PRK02910.1-3"/>
    <property type="match status" value="1"/>
</dbReference>
<dbReference type="PANTHER" id="PTHR33712">
    <property type="entry name" value="LIGHT-INDEPENDENT PROTOCHLOROPHYLLIDE REDUCTASE SUBUNIT B"/>
    <property type="match status" value="1"/>
</dbReference>
<dbReference type="PANTHER" id="PTHR33712:SF7">
    <property type="entry name" value="LIGHT-INDEPENDENT PROTOCHLOROPHYLLIDE REDUCTASE SUBUNIT B"/>
    <property type="match status" value="1"/>
</dbReference>
<dbReference type="Pfam" id="PF00148">
    <property type="entry name" value="Oxidored_nitro"/>
    <property type="match status" value="1"/>
</dbReference>
<dbReference type="Pfam" id="PF08369">
    <property type="entry name" value="PCP_red"/>
    <property type="match status" value="1"/>
</dbReference>
<dbReference type="PIRSF" id="PIRSF000163">
    <property type="entry name" value="PCP_ChlB"/>
    <property type="match status" value="1"/>
</dbReference>
<dbReference type="SUPFAM" id="SSF53807">
    <property type="entry name" value="Helical backbone' metal receptor"/>
    <property type="match status" value="1"/>
</dbReference>
<gene>
    <name evidence="1" type="primary">chlB</name>
</gene>
<reference key="1">
    <citation type="journal article" date="1999" name="Proc. Natl. Acad. Sci. U.S.A.">
        <title>The complete chloroplast DNA sequence of the green alga Nephroselmis olivacea: insights into the architecture of ancestral chloroplast genomes.</title>
        <authorList>
            <person name="Turmel M."/>
            <person name="Otis C."/>
            <person name="Lemieux C."/>
        </authorList>
    </citation>
    <scope>NUCLEOTIDE SEQUENCE [LARGE SCALE GENOMIC DNA]</scope>
    <source>
        <strain>NIES-484 / S-N-5-8</strain>
    </source>
</reference>
<protein>
    <recommendedName>
        <fullName evidence="1">Light-independent protochlorophyllide reductase subunit B</fullName>
        <shortName evidence="1">DPOR subunit B</shortName>
        <shortName evidence="1">LI-POR subunit B</shortName>
        <ecNumber evidence="1">1.3.7.7</ecNumber>
    </recommendedName>
</protein>
<accession>Q9T467</accession>
<name>CHLB_NEPOL</name>
<sequence length="531" mass="60250">MKLAYWMYAGPAHLGVLRVASSFKNVHAIMHAPLGDDYFNVMSSMLERDRDFTPVTASIVDRHVLATGSQRKVVATIHRKDQEDEPDLILVTPTCTSSILQEDLGNYVARAAPYTKSEVLLADVQHYRIHELQAQDRILEQVVRHIMDPERQKGTLDTTPTPTPSANLIGFFDLGFHHRDDSRELRRLLHGLGIEINSVLPKGGSIPDLHQLAKAWFNIIPYREAGLMTAKYLEESFHIPYIDRTPIGLIETRKFIGEIEAILQTRGVDRHEYYEKFIIHHETIVSQAAWFARSIDCQNLLGKRVIVFGDCTHAATITKLLVRELGIHVVCAGTYCKYDEAWFREQVNGYVDEILITEDHTQVADTISRLEPAAIFGTQMERHVGKRLDIPCGVISAPAHIQNFPLSFRPFLGYEGTNVVADLIYNTFRLGMEDHLLELFGGHDTKQIGESQMAESISNSKGCQWTPEAEKELAHIPRFVRSKVKRATERFAQEHGYPVINLECIYLAKQSTSVDIETIQHLLFNDETEVQ</sequence>
<geneLocation type="chloroplast"/>
<organism>
    <name type="scientific">Nephroselmis olivacea</name>
    <name type="common">Green alga</name>
    <dbReference type="NCBI Taxonomy" id="31312"/>
    <lineage>
        <taxon>Eukaryota</taxon>
        <taxon>Viridiplantae</taxon>
        <taxon>Chlorophyta</taxon>
        <taxon>Nephroselmidophyceae</taxon>
        <taxon>Nephroselmidales</taxon>
        <taxon>Nephroselmidaceae</taxon>
        <taxon>Nephroselmis</taxon>
    </lineage>
</organism>
<proteinExistence type="inferred from homology"/>
<comment type="function">
    <text evidence="1">Component of the dark-operative protochlorophyllide reductase (DPOR) that uses Mg-ATP and reduced ferredoxin to reduce ring D of protochlorophyllide (Pchlide) to form chlorophyllide a (Chlide). This reaction is light-independent. The NB-protein (ChlN-ChlB) is the catalytic component of the complex.</text>
</comment>
<comment type="catalytic activity">
    <reaction evidence="1">
        <text>chlorophyllide a + oxidized 2[4Fe-4S]-[ferredoxin] + 2 ADP + 2 phosphate = protochlorophyllide a + reduced 2[4Fe-4S]-[ferredoxin] + 2 ATP + 2 H2O</text>
        <dbReference type="Rhea" id="RHEA:28202"/>
        <dbReference type="Rhea" id="RHEA-COMP:10002"/>
        <dbReference type="Rhea" id="RHEA-COMP:10004"/>
        <dbReference type="ChEBI" id="CHEBI:15377"/>
        <dbReference type="ChEBI" id="CHEBI:30616"/>
        <dbReference type="ChEBI" id="CHEBI:33722"/>
        <dbReference type="ChEBI" id="CHEBI:33723"/>
        <dbReference type="ChEBI" id="CHEBI:43474"/>
        <dbReference type="ChEBI" id="CHEBI:83348"/>
        <dbReference type="ChEBI" id="CHEBI:83350"/>
        <dbReference type="ChEBI" id="CHEBI:456216"/>
        <dbReference type="EC" id="1.3.7.7"/>
    </reaction>
</comment>
<comment type="cofactor">
    <cofactor evidence="1">
        <name>[4Fe-4S] cluster</name>
        <dbReference type="ChEBI" id="CHEBI:49883"/>
    </cofactor>
    <text evidence="1">Binds 1 [4Fe-4S] cluster per heterodimer. The cluster is bound at the heterodimer interface by residues from both subunits.</text>
</comment>
<comment type="pathway">
    <text evidence="1">Porphyrin-containing compound metabolism; chlorophyll biosynthesis (light-independent).</text>
</comment>
<comment type="subunit">
    <text evidence="1">Protochlorophyllide reductase is composed of three subunits; ChlL, ChlN and ChlB. Forms a heterotetramer of two ChlB and two ChlN subunits.</text>
</comment>
<comment type="subcellular location">
    <subcellularLocation>
        <location>Plastid</location>
        <location>Chloroplast</location>
    </subcellularLocation>
</comment>
<comment type="similarity">
    <text evidence="1">Belongs to the ChlB/BchB/BchZ family.</text>
</comment>